<gene>
    <name evidence="1" type="primary">prfA</name>
    <name type="ordered locus">CE1304</name>
</gene>
<dbReference type="EMBL" id="BA000035">
    <property type="protein sequence ID" value="BAC18114.1"/>
    <property type="molecule type" value="Genomic_DNA"/>
</dbReference>
<dbReference type="RefSeq" id="WP_006769265.1">
    <property type="nucleotide sequence ID" value="NC_004369.1"/>
</dbReference>
<dbReference type="SMR" id="Q8FQ31"/>
<dbReference type="STRING" id="196164.gene:10741713"/>
<dbReference type="KEGG" id="cef:CE1304"/>
<dbReference type="eggNOG" id="COG0216">
    <property type="taxonomic scope" value="Bacteria"/>
</dbReference>
<dbReference type="HOGENOM" id="CLU_036856_0_1_11"/>
<dbReference type="OrthoDB" id="9806673at2"/>
<dbReference type="Proteomes" id="UP000001409">
    <property type="component" value="Chromosome"/>
</dbReference>
<dbReference type="GO" id="GO:0005737">
    <property type="term" value="C:cytoplasm"/>
    <property type="evidence" value="ECO:0007669"/>
    <property type="project" value="UniProtKB-SubCell"/>
</dbReference>
<dbReference type="GO" id="GO:0016149">
    <property type="term" value="F:translation release factor activity, codon specific"/>
    <property type="evidence" value="ECO:0007669"/>
    <property type="project" value="UniProtKB-UniRule"/>
</dbReference>
<dbReference type="FunFam" id="3.30.160.20:FF:000004">
    <property type="entry name" value="Peptide chain release factor 1"/>
    <property type="match status" value="1"/>
</dbReference>
<dbReference type="Gene3D" id="3.30.160.20">
    <property type="match status" value="1"/>
</dbReference>
<dbReference type="Gene3D" id="3.30.70.1660">
    <property type="match status" value="1"/>
</dbReference>
<dbReference type="Gene3D" id="6.10.140.1950">
    <property type="match status" value="1"/>
</dbReference>
<dbReference type="HAMAP" id="MF_00093">
    <property type="entry name" value="Rel_fac_1"/>
    <property type="match status" value="1"/>
</dbReference>
<dbReference type="InterPro" id="IPR005139">
    <property type="entry name" value="PCRF"/>
</dbReference>
<dbReference type="InterPro" id="IPR000352">
    <property type="entry name" value="Pep_chain_release_fac_I"/>
</dbReference>
<dbReference type="InterPro" id="IPR045853">
    <property type="entry name" value="Pep_chain_release_fac_I_sf"/>
</dbReference>
<dbReference type="InterPro" id="IPR050057">
    <property type="entry name" value="Prokaryotic/Mito_RF"/>
</dbReference>
<dbReference type="InterPro" id="IPR004373">
    <property type="entry name" value="RF-1"/>
</dbReference>
<dbReference type="NCBIfam" id="TIGR00019">
    <property type="entry name" value="prfA"/>
    <property type="match status" value="1"/>
</dbReference>
<dbReference type="NCBIfam" id="NF001859">
    <property type="entry name" value="PRK00591.1"/>
    <property type="match status" value="1"/>
</dbReference>
<dbReference type="PANTHER" id="PTHR43804">
    <property type="entry name" value="LD18447P"/>
    <property type="match status" value="1"/>
</dbReference>
<dbReference type="PANTHER" id="PTHR43804:SF7">
    <property type="entry name" value="LD18447P"/>
    <property type="match status" value="1"/>
</dbReference>
<dbReference type="Pfam" id="PF03462">
    <property type="entry name" value="PCRF"/>
    <property type="match status" value="1"/>
</dbReference>
<dbReference type="Pfam" id="PF00472">
    <property type="entry name" value="RF-1"/>
    <property type="match status" value="1"/>
</dbReference>
<dbReference type="SMART" id="SM00937">
    <property type="entry name" value="PCRF"/>
    <property type="match status" value="1"/>
</dbReference>
<dbReference type="SUPFAM" id="SSF75620">
    <property type="entry name" value="Release factor"/>
    <property type="match status" value="1"/>
</dbReference>
<dbReference type="PROSITE" id="PS00745">
    <property type="entry name" value="RF_PROK_I"/>
    <property type="match status" value="1"/>
</dbReference>
<name>RF1_COREF</name>
<organism>
    <name type="scientific">Corynebacterium efficiens (strain DSM 44549 / YS-314 / AJ 12310 / JCM 11189 / NBRC 100395)</name>
    <dbReference type="NCBI Taxonomy" id="196164"/>
    <lineage>
        <taxon>Bacteria</taxon>
        <taxon>Bacillati</taxon>
        <taxon>Actinomycetota</taxon>
        <taxon>Actinomycetes</taxon>
        <taxon>Mycobacteriales</taxon>
        <taxon>Corynebacteriaceae</taxon>
        <taxon>Corynebacterium</taxon>
    </lineage>
</organism>
<protein>
    <recommendedName>
        <fullName evidence="1">Peptide chain release factor 1</fullName>
        <shortName evidence="1">RF-1</shortName>
    </recommendedName>
</protein>
<comment type="function">
    <text evidence="1">Peptide chain release factor 1 directs the termination of translation in response to the peptide chain termination codons UAG and UAA.</text>
</comment>
<comment type="subcellular location">
    <subcellularLocation>
        <location evidence="1">Cytoplasm</location>
    </subcellularLocation>
</comment>
<comment type="PTM">
    <text evidence="1">Methylated by PrmC. Methylation increases the termination efficiency of RF1.</text>
</comment>
<comment type="similarity">
    <text evidence="1">Belongs to the prokaryotic/mitochondrial release factor family.</text>
</comment>
<proteinExistence type="inferred from homology"/>
<sequence length="358" mass="39862">MAGHVSAVDDILAEYHGLEEQMADPALHNDPAAARRVGKRYSELQPIINVHRQLVQVRDDLEAAREMAHEDHEFAAEAERLEVELVELEEKLADLLAPRDEHDGDDIVMEIKAGAGGEEAALFAGDLLRMYQKYADKHGFIIEVLDSAESDLGGVKDITLSIRSRQPSRDGAWSQFKFEGGVHRVQRVPVTESQGRIQTSAAGVLVYPEPDEVEDVEIDEKEIRVDVYRSSGKGGQGVNTTDSAVRITHLPTGIVVTCQKERSQIQNRARAMQVLAARLQALQKEEADAEAAEGRASQIRTMDRSERIRTYNWPENRISDHRIGFKANNLDAVLNGELDDLFTALRAAERAERLEADN</sequence>
<keyword id="KW-0963">Cytoplasm</keyword>
<keyword id="KW-0488">Methylation</keyword>
<keyword id="KW-0648">Protein biosynthesis</keyword>
<keyword id="KW-1185">Reference proteome</keyword>
<feature type="chain" id="PRO_0000263260" description="Peptide chain release factor 1">
    <location>
        <begin position="1"/>
        <end position="358"/>
    </location>
</feature>
<feature type="modified residue" description="N5-methylglutamine" evidence="1">
    <location>
        <position position="236"/>
    </location>
</feature>
<accession>Q8FQ31</accession>
<evidence type="ECO:0000255" key="1">
    <source>
        <dbReference type="HAMAP-Rule" id="MF_00093"/>
    </source>
</evidence>
<reference key="1">
    <citation type="journal article" date="2003" name="Genome Res.">
        <title>Comparative complete genome sequence analysis of the amino acid replacements responsible for the thermostability of Corynebacterium efficiens.</title>
        <authorList>
            <person name="Nishio Y."/>
            <person name="Nakamura Y."/>
            <person name="Kawarabayasi Y."/>
            <person name="Usuda Y."/>
            <person name="Kimura E."/>
            <person name="Sugimoto S."/>
            <person name="Matsui K."/>
            <person name="Yamagishi A."/>
            <person name="Kikuchi H."/>
            <person name="Ikeo K."/>
            <person name="Gojobori T."/>
        </authorList>
    </citation>
    <scope>NUCLEOTIDE SEQUENCE [LARGE SCALE GENOMIC DNA]</scope>
    <source>
        <strain>DSM 44549 / YS-314 / AJ 12310 / JCM 11189 / NBRC 100395</strain>
    </source>
</reference>